<dbReference type="SMR" id="P0C239"/>
<dbReference type="GO" id="GO:0072562">
    <property type="term" value="C:blood microparticle"/>
    <property type="evidence" value="ECO:0007669"/>
    <property type="project" value="TreeGrafter"/>
</dbReference>
<dbReference type="GO" id="GO:0031838">
    <property type="term" value="C:haptoglobin-hemoglobin complex"/>
    <property type="evidence" value="ECO:0007669"/>
    <property type="project" value="TreeGrafter"/>
</dbReference>
<dbReference type="GO" id="GO:0005833">
    <property type="term" value="C:hemoglobin complex"/>
    <property type="evidence" value="ECO:0007669"/>
    <property type="project" value="InterPro"/>
</dbReference>
<dbReference type="GO" id="GO:0031720">
    <property type="term" value="F:haptoglobin binding"/>
    <property type="evidence" value="ECO:0007669"/>
    <property type="project" value="TreeGrafter"/>
</dbReference>
<dbReference type="GO" id="GO:0020037">
    <property type="term" value="F:heme binding"/>
    <property type="evidence" value="ECO:0007669"/>
    <property type="project" value="InterPro"/>
</dbReference>
<dbReference type="GO" id="GO:0046872">
    <property type="term" value="F:metal ion binding"/>
    <property type="evidence" value="ECO:0007669"/>
    <property type="project" value="UniProtKB-KW"/>
</dbReference>
<dbReference type="GO" id="GO:0043177">
    <property type="term" value="F:organic acid binding"/>
    <property type="evidence" value="ECO:0007669"/>
    <property type="project" value="TreeGrafter"/>
</dbReference>
<dbReference type="GO" id="GO:0019825">
    <property type="term" value="F:oxygen binding"/>
    <property type="evidence" value="ECO:0007669"/>
    <property type="project" value="InterPro"/>
</dbReference>
<dbReference type="GO" id="GO:0005344">
    <property type="term" value="F:oxygen carrier activity"/>
    <property type="evidence" value="ECO:0007669"/>
    <property type="project" value="UniProtKB-KW"/>
</dbReference>
<dbReference type="GO" id="GO:0004601">
    <property type="term" value="F:peroxidase activity"/>
    <property type="evidence" value="ECO:0007669"/>
    <property type="project" value="TreeGrafter"/>
</dbReference>
<dbReference type="GO" id="GO:0042744">
    <property type="term" value="P:hydrogen peroxide catabolic process"/>
    <property type="evidence" value="ECO:0007669"/>
    <property type="project" value="TreeGrafter"/>
</dbReference>
<dbReference type="CDD" id="cd08925">
    <property type="entry name" value="Hb-beta-like"/>
    <property type="match status" value="1"/>
</dbReference>
<dbReference type="FunFam" id="1.10.490.10:FF:000001">
    <property type="entry name" value="Hemoglobin subunit beta"/>
    <property type="match status" value="1"/>
</dbReference>
<dbReference type="Gene3D" id="1.10.490.10">
    <property type="entry name" value="Globins"/>
    <property type="match status" value="1"/>
</dbReference>
<dbReference type="InterPro" id="IPR000971">
    <property type="entry name" value="Globin"/>
</dbReference>
<dbReference type="InterPro" id="IPR009050">
    <property type="entry name" value="Globin-like_sf"/>
</dbReference>
<dbReference type="InterPro" id="IPR012292">
    <property type="entry name" value="Globin/Proto"/>
</dbReference>
<dbReference type="InterPro" id="IPR002337">
    <property type="entry name" value="Hemoglobin_b"/>
</dbReference>
<dbReference type="InterPro" id="IPR050056">
    <property type="entry name" value="Hemoglobin_oxygen_transport"/>
</dbReference>
<dbReference type="PANTHER" id="PTHR11442">
    <property type="entry name" value="HEMOGLOBIN FAMILY MEMBER"/>
    <property type="match status" value="1"/>
</dbReference>
<dbReference type="PANTHER" id="PTHR11442:SF7">
    <property type="entry name" value="HEMOGLOBIN SUBUNIT EPSILON"/>
    <property type="match status" value="1"/>
</dbReference>
<dbReference type="Pfam" id="PF00042">
    <property type="entry name" value="Globin"/>
    <property type="match status" value="1"/>
</dbReference>
<dbReference type="PRINTS" id="PR00814">
    <property type="entry name" value="BETAHAEM"/>
</dbReference>
<dbReference type="SUPFAM" id="SSF46458">
    <property type="entry name" value="Globin-like"/>
    <property type="match status" value="1"/>
</dbReference>
<dbReference type="PROSITE" id="PS01033">
    <property type="entry name" value="GLOBIN"/>
    <property type="match status" value="1"/>
</dbReference>
<name>HBB_ARTOR</name>
<feature type="chain" id="PRO_0000260298" description="Hemoglobin subunit beta">
    <location>
        <begin position="1"/>
        <end position="146"/>
    </location>
</feature>
<feature type="domain" description="Globin" evidence="1">
    <location>
        <begin position="2"/>
        <end position="146"/>
    </location>
</feature>
<feature type="binding site" description="distal binding residue">
    <location>
        <position position="63"/>
    </location>
    <ligand>
        <name>heme b</name>
        <dbReference type="ChEBI" id="CHEBI:60344"/>
    </ligand>
    <ligandPart>
        <name>Fe</name>
        <dbReference type="ChEBI" id="CHEBI:18248"/>
    </ligandPart>
</feature>
<feature type="binding site" description="proximal binding residue">
    <location>
        <position position="92"/>
    </location>
    <ligand>
        <name>heme b</name>
        <dbReference type="ChEBI" id="CHEBI:60344"/>
    </ligand>
    <ligandPart>
        <name>Fe</name>
        <dbReference type="ChEBI" id="CHEBI:18248"/>
    </ligandPart>
</feature>
<accession>P0C239</accession>
<keyword id="KW-0903">Direct protein sequencing</keyword>
<keyword id="KW-0349">Heme</keyword>
<keyword id="KW-0408">Iron</keyword>
<keyword id="KW-0479">Metal-binding</keyword>
<keyword id="KW-0561">Oxygen transport</keyword>
<keyword id="KW-0813">Transport</keyword>
<comment type="function">
    <text>Involved in oxygen transport from the lung to the various peripheral tissues.</text>
</comment>
<comment type="subunit">
    <text>Heterotetramer of two alpha chains and two beta chains.</text>
</comment>
<comment type="tissue specificity">
    <text>Red blood cells.</text>
</comment>
<comment type="similarity">
    <text evidence="1">Belongs to the globin family.</text>
</comment>
<protein>
    <recommendedName>
        <fullName>Hemoglobin subunit beta</fullName>
    </recommendedName>
    <alternativeName>
        <fullName>Beta-globin</fullName>
    </alternativeName>
    <alternativeName>
        <fullName>Hemoglobin beta chain</fullName>
    </alternativeName>
</protein>
<sequence>VQWSDSERTIINGIFSQLDYDDLGPKAFSRCLIVYPWTQRYFSSFGNLDNAEAIMGNANVAAHGIKVLHGLDRGVKNMDDIMGVYAELSSLHSEKLHVDPDNFKLLSDCITIVVAAKLGNAFTPETQAAFQKFLGAVVMFLGKQYH</sequence>
<gene>
    <name type="primary">hbb</name>
</gene>
<reference key="1">
    <citation type="journal article" date="1998" name="J. Biol. Chem.">
        <title>The hemoglobins of the antarctic fishes Atedidraco orianae and Pogonophryne scotti. Amino acid sequence, lack of cooperativity, and ligand binding properties.</title>
        <authorList>
            <person name="Tamburrini M."/>
            <person name="Romano M."/>
            <person name="Carratore V."/>
            <person name="Kunzmann A."/>
            <person name="Coletta M."/>
            <person name="di Prisco G."/>
        </authorList>
    </citation>
    <scope>PROTEIN SEQUENCE</scope>
</reference>
<organism>
    <name type="scientific">Artedidraco orianae</name>
    <name type="common">Barbeled plunderfish</name>
    <dbReference type="NCBI Taxonomy" id="136232"/>
    <lineage>
        <taxon>Eukaryota</taxon>
        <taxon>Metazoa</taxon>
        <taxon>Chordata</taxon>
        <taxon>Craniata</taxon>
        <taxon>Vertebrata</taxon>
        <taxon>Euteleostomi</taxon>
        <taxon>Actinopterygii</taxon>
        <taxon>Neopterygii</taxon>
        <taxon>Teleostei</taxon>
        <taxon>Neoteleostei</taxon>
        <taxon>Acanthomorphata</taxon>
        <taxon>Eupercaria</taxon>
        <taxon>Perciformes</taxon>
        <taxon>Notothenioidei</taxon>
        <taxon>Artedidraco</taxon>
    </lineage>
</organism>
<proteinExistence type="evidence at protein level"/>
<evidence type="ECO:0000255" key="1">
    <source>
        <dbReference type="PROSITE-ProRule" id="PRU00238"/>
    </source>
</evidence>